<organism>
    <name type="scientific">Streptococcus pneumoniae (strain Taiwan19F-14)</name>
    <dbReference type="NCBI Taxonomy" id="487213"/>
    <lineage>
        <taxon>Bacteria</taxon>
        <taxon>Bacillati</taxon>
        <taxon>Bacillota</taxon>
        <taxon>Bacilli</taxon>
        <taxon>Lactobacillales</taxon>
        <taxon>Streptococcaceae</taxon>
        <taxon>Streptococcus</taxon>
    </lineage>
</organism>
<keyword id="KW-0687">Ribonucleoprotein</keyword>
<keyword id="KW-0689">Ribosomal protein</keyword>
<keyword id="KW-0694">RNA-binding</keyword>
<keyword id="KW-0699">rRNA-binding</keyword>
<dbReference type="EMBL" id="CP000921">
    <property type="protein sequence ID" value="ACO22648.1"/>
    <property type="molecule type" value="Genomic_DNA"/>
</dbReference>
<dbReference type="RefSeq" id="WP_000616545.1">
    <property type="nucleotide sequence ID" value="NC_012469.1"/>
</dbReference>
<dbReference type="SMR" id="C1CP98"/>
<dbReference type="GeneID" id="93738967"/>
<dbReference type="KEGG" id="snt:SPT_0266"/>
<dbReference type="HOGENOM" id="CLU_095071_2_1_9"/>
<dbReference type="GO" id="GO:0022625">
    <property type="term" value="C:cytosolic large ribosomal subunit"/>
    <property type="evidence" value="ECO:0007669"/>
    <property type="project" value="TreeGrafter"/>
</dbReference>
<dbReference type="GO" id="GO:0070180">
    <property type="term" value="F:large ribosomal subunit rRNA binding"/>
    <property type="evidence" value="ECO:0007669"/>
    <property type="project" value="TreeGrafter"/>
</dbReference>
<dbReference type="GO" id="GO:0003735">
    <property type="term" value="F:structural constituent of ribosome"/>
    <property type="evidence" value="ECO:0007669"/>
    <property type="project" value="InterPro"/>
</dbReference>
<dbReference type="GO" id="GO:0006412">
    <property type="term" value="P:translation"/>
    <property type="evidence" value="ECO:0007669"/>
    <property type="project" value="UniProtKB-UniRule"/>
</dbReference>
<dbReference type="CDD" id="cd00337">
    <property type="entry name" value="Ribosomal_uL14"/>
    <property type="match status" value="1"/>
</dbReference>
<dbReference type="FunFam" id="2.40.150.20:FF:000001">
    <property type="entry name" value="50S ribosomal protein L14"/>
    <property type="match status" value="1"/>
</dbReference>
<dbReference type="Gene3D" id="2.40.150.20">
    <property type="entry name" value="Ribosomal protein L14"/>
    <property type="match status" value="1"/>
</dbReference>
<dbReference type="HAMAP" id="MF_01367">
    <property type="entry name" value="Ribosomal_uL14"/>
    <property type="match status" value="1"/>
</dbReference>
<dbReference type="InterPro" id="IPR000218">
    <property type="entry name" value="Ribosomal_uL14"/>
</dbReference>
<dbReference type="InterPro" id="IPR005745">
    <property type="entry name" value="Ribosomal_uL14_bac-type"/>
</dbReference>
<dbReference type="InterPro" id="IPR019972">
    <property type="entry name" value="Ribosomal_uL14_CS"/>
</dbReference>
<dbReference type="InterPro" id="IPR036853">
    <property type="entry name" value="Ribosomal_uL14_sf"/>
</dbReference>
<dbReference type="NCBIfam" id="TIGR01067">
    <property type="entry name" value="rplN_bact"/>
    <property type="match status" value="1"/>
</dbReference>
<dbReference type="PANTHER" id="PTHR11761">
    <property type="entry name" value="50S/60S RIBOSOMAL PROTEIN L14/L23"/>
    <property type="match status" value="1"/>
</dbReference>
<dbReference type="PANTHER" id="PTHR11761:SF3">
    <property type="entry name" value="LARGE RIBOSOMAL SUBUNIT PROTEIN UL14M"/>
    <property type="match status" value="1"/>
</dbReference>
<dbReference type="Pfam" id="PF00238">
    <property type="entry name" value="Ribosomal_L14"/>
    <property type="match status" value="1"/>
</dbReference>
<dbReference type="SMART" id="SM01374">
    <property type="entry name" value="Ribosomal_L14"/>
    <property type="match status" value="1"/>
</dbReference>
<dbReference type="SUPFAM" id="SSF50193">
    <property type="entry name" value="Ribosomal protein L14"/>
    <property type="match status" value="1"/>
</dbReference>
<dbReference type="PROSITE" id="PS00049">
    <property type="entry name" value="RIBOSOMAL_L14"/>
    <property type="match status" value="1"/>
</dbReference>
<name>RL14_STRZT</name>
<gene>
    <name evidence="1" type="primary">rplN</name>
    <name type="ordered locus">SPT_0266</name>
</gene>
<feature type="chain" id="PRO_1000166944" description="Large ribosomal subunit protein uL14">
    <location>
        <begin position="1"/>
        <end position="122"/>
    </location>
</feature>
<reference key="1">
    <citation type="journal article" date="2010" name="Genome Biol.">
        <title>Structure and dynamics of the pan-genome of Streptococcus pneumoniae and closely related species.</title>
        <authorList>
            <person name="Donati C."/>
            <person name="Hiller N.L."/>
            <person name="Tettelin H."/>
            <person name="Muzzi A."/>
            <person name="Croucher N.J."/>
            <person name="Angiuoli S.V."/>
            <person name="Oggioni M."/>
            <person name="Dunning Hotopp J.C."/>
            <person name="Hu F.Z."/>
            <person name="Riley D.R."/>
            <person name="Covacci A."/>
            <person name="Mitchell T.J."/>
            <person name="Bentley S.D."/>
            <person name="Kilian M."/>
            <person name="Ehrlich G.D."/>
            <person name="Rappuoli R."/>
            <person name="Moxon E.R."/>
            <person name="Masignani V."/>
        </authorList>
    </citation>
    <scope>NUCLEOTIDE SEQUENCE [LARGE SCALE GENOMIC DNA]</scope>
    <source>
        <strain>Taiwan19F-14</strain>
    </source>
</reference>
<comment type="function">
    <text evidence="1">Binds to 23S rRNA. Forms part of two intersubunit bridges in the 70S ribosome.</text>
</comment>
<comment type="subunit">
    <text evidence="1">Part of the 50S ribosomal subunit. Forms a cluster with proteins L3 and L19. In the 70S ribosome, L14 and L19 interact and together make contacts with the 16S rRNA in bridges B5 and B8.</text>
</comment>
<comment type="similarity">
    <text evidence="1">Belongs to the universal ribosomal protein uL14 family.</text>
</comment>
<sequence>MIQTETRLKVADNSGAREILTIKVLGGSGRKFANIGDVIVASVKQATPGGAVKKGDVVKAVIVRTKSGARRADGSYIKFDENAAVIIREDKTPRGTRIFGPVARELREGGFMKIVSLAPEVL</sequence>
<evidence type="ECO:0000255" key="1">
    <source>
        <dbReference type="HAMAP-Rule" id="MF_01367"/>
    </source>
</evidence>
<evidence type="ECO:0000305" key="2"/>
<protein>
    <recommendedName>
        <fullName evidence="1">Large ribosomal subunit protein uL14</fullName>
    </recommendedName>
    <alternativeName>
        <fullName evidence="2">50S ribosomal protein L14</fullName>
    </alternativeName>
</protein>
<proteinExistence type="inferred from homology"/>
<accession>C1CP98</accession>